<comment type="function">
    <text>Inhibitory regulator of the Ras-cyclic AMP pathway in S.cerevisiae. Stimulates the GTPase activity of Ras proteins.</text>
</comment>
<comment type="subcellular location">
    <subcellularLocation>
        <location evidence="4">Cytoplasm</location>
    </subcellularLocation>
</comment>
<name>IRA1_YEAST</name>
<feature type="chain" id="PRO_0000056657" description="Inhibitory regulator protein IRA1">
    <location>
        <begin position="1"/>
        <end position="3092"/>
    </location>
</feature>
<feature type="domain" description="Ras-GAP" evidence="2">
    <location>
        <begin position="1725"/>
        <end position="1930"/>
    </location>
</feature>
<feature type="region of interest" description="Disordered" evidence="3">
    <location>
        <begin position="375"/>
        <end position="430"/>
    </location>
</feature>
<feature type="region of interest" description="Disordered" evidence="3">
    <location>
        <begin position="450"/>
        <end position="487"/>
    </location>
</feature>
<feature type="region of interest" description="Disordered" evidence="3">
    <location>
        <begin position="946"/>
        <end position="988"/>
    </location>
</feature>
<feature type="region of interest" description="Disordered" evidence="3">
    <location>
        <begin position="1003"/>
        <end position="1023"/>
    </location>
</feature>
<feature type="compositionally biased region" description="Low complexity" evidence="3">
    <location>
        <begin position="379"/>
        <end position="400"/>
    </location>
</feature>
<feature type="compositionally biased region" description="Polar residues" evidence="3">
    <location>
        <begin position="401"/>
        <end position="430"/>
    </location>
</feature>
<feature type="compositionally biased region" description="Low complexity" evidence="3">
    <location>
        <begin position="455"/>
        <end position="487"/>
    </location>
</feature>
<feature type="compositionally biased region" description="Low complexity" evidence="3">
    <location>
        <begin position="965"/>
        <end position="988"/>
    </location>
</feature>
<feature type="site" description="Arginine finger; crucial for GTP hydrolysis by stabilizing the transition state" evidence="2">
    <location>
        <position position="1750"/>
    </location>
</feature>
<feature type="modified residue" description="Phosphoserine" evidence="6 7">
    <location>
        <position position="497"/>
    </location>
</feature>
<feature type="modified residue" description="Phosphoserine" evidence="7">
    <location>
        <position position="915"/>
    </location>
</feature>
<feature type="modified residue" description="Phosphoserine" evidence="7">
    <location>
        <position position="1342"/>
    </location>
</feature>
<feature type="modified residue" description="Phosphoserine; by PKA" evidence="1">
    <location>
        <position position="1753"/>
    </location>
</feature>
<feature type="modified residue" description="Phosphoserine; by PKA" evidence="1">
    <location>
        <position position="3004"/>
    </location>
</feature>
<feature type="sequence conflict" description="In Ref. 4; AAA34709." evidence="5" ref="4">
    <original>V</original>
    <variation>G</variation>
    <location>
        <position position="361"/>
    </location>
</feature>
<keyword id="KW-0963">Cytoplasm</keyword>
<keyword id="KW-0343">GTPase activation</keyword>
<keyword id="KW-0597">Phosphoprotein</keyword>
<keyword id="KW-1185">Reference proteome</keyword>
<evidence type="ECO:0000255" key="1"/>
<evidence type="ECO:0000255" key="2">
    <source>
        <dbReference type="PROSITE-ProRule" id="PRU00167"/>
    </source>
</evidence>
<evidence type="ECO:0000256" key="3">
    <source>
        <dbReference type="SAM" id="MobiDB-lite"/>
    </source>
</evidence>
<evidence type="ECO:0000269" key="4">
    <source>
    </source>
</evidence>
<evidence type="ECO:0000305" key="5"/>
<evidence type="ECO:0007744" key="6">
    <source>
    </source>
</evidence>
<evidence type="ECO:0007744" key="7">
    <source>
    </source>
</evidence>
<sequence>MNQSDPQDKKNFPMEYSLTKHLFFDRLLLVLPIESNLKTYADVEADSVFNSCRSIILNIAITKDLNPIIENTLGLIDLIVQDEEITSDNITDDIAHSILVLLRLLSDVFEYYWDQNNDFKKIRNDNYKPGFSSHRPNFHTSRPKHTRINPALATMLLCKISKLKFNTRTLKVLQNMSHHLSGSATISKSSILPDSQEFLQKRNYPAYTEKIDLTIDYIQRFISASNHVEFTKCVKTKVVAPLLISHTSTELGVVNHLDLFGCEYLTDKNLLAYLDILQHLSSYMKRTIFHSLLLYYASKAFLFWIMARPKEYVKIYNNLISSDYNSPSSSSDNGGSNNSDKTSISQLVSLLFDDVYSTFSVSSLLTNVNNDHHYHLHHSSSSSKTTNTNSPNSISKTSIKQSSVNASGNVSPSQFSTGNDASPTSPMASLSSPLNTNILGYPLSPITSTLGQANTSTSTTAATTKTDADTPSTMNTNNNNNNNNSANLNNIPQRIFSLDDISSFNSSRKSLNLDDSNSLFLWDTSQHSNASMTNTNMHAGVNNSQSQNDQSSLNYMENIMELYSNYTGSELSSHTAILRFLVVLTLLDSEVYDEMNSNSYRKISEPIMNINPKDSNTSSWGSASKNPSIRHLTHGLKKLTLQQGRKRNVKFLTYLIRNLNGGQFVSDVSLIDSIRSILFLMTMTSSISQIDSNIASVIFSKRFYNLLGQNLEVGTNWNSATANTFISHCVERNPLTHRRLQLEFFASGLQLDSDLFLRHLQLEKELNHIDLPKISLYTEGFRVFFHLVSTKKLHEDIAEKTSSVLKRLFCIIADILLKATPYFDDNVTKIIASILDGHILDQFDAARTLSNDDHVSFDAATSVYTEPTEIIHNSSDASLVSSLSQSPLSINSGSNITNTRTWDIQSILPTLSNRSSASDLSLSNILTNPLEAQQNNNANLLAHRLSGVPTTKRYASPNDSERSRQSPYSSPPQLQQSDLPSPLSVLSSSAGFSSNHSITATPTILKNIKSPKPNKTKKIADDKQLKQPSYSRVILSDNDEARKIMMNIFSIFKRMTNWFIRPDANTEFPKTFTDIIKPLFVSILDSNQRLQVTARAFIEIPLSYIATFEDIDNDLDPRVLNDHYLLCTYAVTLFASSLFDLKLENAKREMLLDIIVKFQRVRSYLSNLAEKHNLVQAIITTERLTLPLLVGAVGSGIFISLYCSRGNTPRLIKISCCEFLRSLRFYQKYVGALDQYSIYNIDFIDAMAQDNFTASGSVALQRRLRNNILTYIKGSDSILLDSMDVIYKKWFYFSCSKSVTQEELVDFRSLAGILASMSGILSDMQELEKSKSAPDNEGDSLSFESRNPAYEVHKSLKLELTKKMNFFISKQCQWLNNPNLLTRENSRDILSIELHPLSFNLLFNNLGLKIDELMSIDLSKSHEDSSFVLLEQIIIIIRTILKRDDDEKIMLLFSTDLLDAVDKLIEIVEKISIKSSKYYKGIIQMSKMFRAFEHSEKNLGISNHFHLKNKWLKLVIGWFKLSINKDYDFENLSRPLREMDLQKRDEDFLYIDTSIESAKALAYLTHNVPLEIPPSSSKEDWNRSSTVSFGNHFTILLKGLEKSADLNQFPVSLRHKISILNENVIIALTNLSNANVNVSLKFTLPMGYSPNKDIRIAFLRVFIDIVTNYPVNPEKHEMDKMLAIDDFLKYIIKNPILAFFGSLACSPADVDLYAGGFLNAFDTRNASHILVTELLKQEIKRAARSDDILRRNSCATRALSLYTRSRGNKYLIKTLRPVLQGIVDNKESFEIDKMKPGSENSEKMLDLFEKYMTRLIDAITSSIDDFPIELVDICKTIYNAASVNFPEYAYIAVGSFVFLRFIGPALVSPDSENIIIVTHAHDRKPFITLAKVIQSLANGRENIFKKDILVSKEEFLKTCSDKIFNFLSELCKIPTNNFTVNVREDPTPISFDYSFLHKFFYLNEFTIRKEIINESKLPGEFSFLKNTVMLNDKILGVLGQPSMEIKNEIPPFVVENREKYPSLYEFMSRYAFKKVDMKEEEEDNAPFVHEAMTLDGIQIIVVTFTNCEYNNFVMDSLVYKVLQIYARMWCSKHYVVIDCTTFYGGKANFQKLTTLFFSLIPEQASSNCMGCYYFNVNKSFMDQWASSYTVENPYLVTTIPRCFINSNTDQSLIKSLGLSGRSLEVLKDVRVTLHDITLYDKEKKKFCPVSLKIGNKYFQVLHEIPQLYKVTVSNRTFSIKFNNVYKISNLISVDVSNTTGVSSEFTLSLDNEEKLVFCSPKYLEIVKMFYYAQLKMEEDFGTDFSNDISFSTSSSAVNASYCNVKEVGEIISHLSLVILVGLFNEDDLVKNISYNLLVATQEAFNLDFGTRLHKSPETYVPDDTTTFLALIFKAFSESSTELTPYIWKYMLDGLENDVIPQEHIPTVVCSLSYWVPNLYEHVYLANDEEGPEAISRIIYSLIRLTVKEPNFTTAYLQQIWFLLALDGRLTNVIVEEIVSHALDRDSENRDWMKAVSILTSFPTTEIACQVIEKLINMIKSFLPSLAVEASAHSWSELTILSKISVSIFFESPLLSQMYLPEILFAVSLLIDVGPSEIRVSLYELLMNVCHSLTNNESLPERNRKNLDIVCATFARQKLNFISGFSQEKGRVLPNFAASSFSSKFGTLDLFTKNIMLLMEYGSISEGAQWEAKYKKYLMDAIFGHRSFFSARAMMILGIMSKSHTSLFLCKELLVETMKVFAEPVVDDEQMFIIIAHVFTYSKIVEGLDPSSELMKELFWLATICVESPHPLLFEGGLLFMVNCLKRLYTVHLQLGFDGKSLAKKLMESRNFAATLLAKLESYNGCIWNEDNFPHIILGFIANGLSIPVVKGAALDCLQALFKNTYYERKSNPKSSDYLCYLFLLHLVLSPEQLSTLLLEVGFEDELVPLNNTLKVPLTLINWLSSDSDKSNIVLYQGALLFSCVMSDEPCKFRFALLMRYLLKVNPICVFRFYTLTRKEFRRLSTLEQSSEAVAVSFELIGMLVTHSEFNYLEEFNDEMVELLKKRGLSVVKPLDIFDQEHIEKLKGEGEHQVAIYERKRLATMILARMSCS</sequence>
<reference key="1">
    <citation type="journal article" date="1994" name="EMBO J.">
        <title>Complete DNA sequence of yeast chromosome II.</title>
        <authorList>
            <person name="Feldmann H."/>
            <person name="Aigle M."/>
            <person name="Aljinovic G."/>
            <person name="Andre B."/>
            <person name="Baclet M.C."/>
            <person name="Barthe C."/>
            <person name="Baur A."/>
            <person name="Becam A.-M."/>
            <person name="Biteau N."/>
            <person name="Boles E."/>
            <person name="Brandt T."/>
            <person name="Brendel M."/>
            <person name="Brueckner M."/>
            <person name="Bussereau F."/>
            <person name="Christiansen C."/>
            <person name="Contreras R."/>
            <person name="Crouzet M."/>
            <person name="Cziepluch C."/>
            <person name="Demolis N."/>
            <person name="Delaveau T."/>
            <person name="Doignon F."/>
            <person name="Domdey H."/>
            <person name="Duesterhus S."/>
            <person name="Dubois E."/>
            <person name="Dujon B."/>
            <person name="El Bakkoury M."/>
            <person name="Entian K.-D."/>
            <person name="Feuermann M."/>
            <person name="Fiers W."/>
            <person name="Fobo G.M."/>
            <person name="Fritz C."/>
            <person name="Gassenhuber J."/>
            <person name="Glansdorff N."/>
            <person name="Goffeau A."/>
            <person name="Grivell L.A."/>
            <person name="de Haan M."/>
            <person name="Hein C."/>
            <person name="Herbert C.J."/>
            <person name="Hollenberg C.P."/>
            <person name="Holmstroem K."/>
            <person name="Jacq C."/>
            <person name="Jacquet M."/>
            <person name="Jauniaux J.-C."/>
            <person name="Jonniaux J.-L."/>
            <person name="Kallesoee T."/>
            <person name="Kiesau P."/>
            <person name="Kirchrath L."/>
            <person name="Koetter P."/>
            <person name="Korol S."/>
            <person name="Liebl S."/>
            <person name="Logghe M."/>
            <person name="Lohan A.J.E."/>
            <person name="Louis E.J."/>
            <person name="Li Z.Y."/>
            <person name="Maat M.J."/>
            <person name="Mallet L."/>
            <person name="Mannhaupt G."/>
            <person name="Messenguy F."/>
            <person name="Miosga T."/>
            <person name="Molemans F."/>
            <person name="Mueller S."/>
            <person name="Nasr F."/>
            <person name="Obermaier B."/>
            <person name="Perea J."/>
            <person name="Pierard A."/>
            <person name="Piravandi E."/>
            <person name="Pohl F.M."/>
            <person name="Pohl T.M."/>
            <person name="Potier S."/>
            <person name="Proft M."/>
            <person name="Purnelle B."/>
            <person name="Ramezani Rad M."/>
            <person name="Rieger M."/>
            <person name="Rose M."/>
            <person name="Schaaff-Gerstenschlaeger I."/>
            <person name="Scherens B."/>
            <person name="Schwarzlose C."/>
            <person name="Skala J."/>
            <person name="Slonimski P.P."/>
            <person name="Smits P.H.M."/>
            <person name="Souciet J.-L."/>
            <person name="Steensma H.Y."/>
            <person name="Stucka R."/>
            <person name="Urrestarazu L.A."/>
            <person name="van der Aart Q.J.M."/>
            <person name="Van Dyck L."/>
            <person name="Vassarotti A."/>
            <person name="Vetter I."/>
            <person name="Vierendeels F."/>
            <person name="Vissers S."/>
            <person name="Wagner G."/>
            <person name="de Wergifosse P."/>
            <person name="Wolfe K.H."/>
            <person name="Zagulski M."/>
            <person name="Zimmermann F.K."/>
            <person name="Mewes H.-W."/>
            <person name="Kleine K."/>
        </authorList>
    </citation>
    <scope>NUCLEOTIDE SEQUENCE [LARGE SCALE GENOMIC DNA]</scope>
    <source>
        <strain>ATCC 204508 / S288c</strain>
    </source>
</reference>
<reference key="2">
    <citation type="journal article" date="2014" name="G3 (Bethesda)">
        <title>The reference genome sequence of Saccharomyces cerevisiae: Then and now.</title>
        <authorList>
            <person name="Engel S.R."/>
            <person name="Dietrich F.S."/>
            <person name="Fisk D.G."/>
            <person name="Binkley G."/>
            <person name="Balakrishnan R."/>
            <person name="Costanzo M.C."/>
            <person name="Dwight S.S."/>
            <person name="Hitz B.C."/>
            <person name="Karra K."/>
            <person name="Nash R.S."/>
            <person name="Weng S."/>
            <person name="Wong E.D."/>
            <person name="Lloyd P."/>
            <person name="Skrzypek M.S."/>
            <person name="Miyasato S.R."/>
            <person name="Simison M."/>
            <person name="Cherry J.M."/>
        </authorList>
    </citation>
    <scope>GENOME REANNOTATION</scope>
    <source>
        <strain>ATCC 204508 / S288c</strain>
    </source>
</reference>
<reference key="3">
    <citation type="journal article" date="1994" name="Yeast">
        <title>The sequence of 12.5 kb from the right arm of chromosome II predicts a new N-terminal sequence for the IRA1 protein and reveals two new genes, one of which is a DEAD-box helicase.</title>
        <authorList>
            <person name="Zagulski M."/>
            <person name="Becam A.-M."/>
            <person name="Grzybowska E."/>
            <person name="Lacroute F."/>
            <person name="Migdalski A."/>
            <person name="Slonimski P.P."/>
            <person name="Sokolowska B."/>
            <person name="Herbert C.J."/>
        </authorList>
    </citation>
    <scope>NUCLEOTIDE SEQUENCE [GENOMIC DNA] OF 1-2767</scope>
    <source>
        <strain>ATCC 204508 / S288c</strain>
    </source>
</reference>
<reference key="4">
    <citation type="journal article" date="1989" name="Mol. Cell. Biol.">
        <title>IRA1, an inhibitory regulator of the RAS-cyclic AMP pathway in Saccharomyces cerevisiae.</title>
        <authorList>
            <person name="Tanaka K."/>
            <person name="Matsumoto K."/>
            <person name="Toh-e A."/>
        </authorList>
    </citation>
    <scope>NUCLEOTIDE SEQUENCE [GENOMIC DNA] OF 155-3092</scope>
</reference>
<reference key="5">
    <citation type="journal article" date="1994" name="Yeast">
        <title>The sequence of 29.7 kb from the right arm of chromosome II reveals 13 complete open reading frames, of which ten correspond to new genes.</title>
        <authorList>
            <person name="Becam A.-M."/>
            <person name="Cullin C."/>
            <person name="Grzybowska E."/>
            <person name="Lacroute F."/>
            <person name="Nasr F."/>
            <person name="Ozier-Kalogeropoulos O."/>
            <person name="Palucha A."/>
            <person name="Slonimski P.P."/>
            <person name="Zagulski M."/>
            <person name="Herbert C.J."/>
        </authorList>
    </citation>
    <scope>NUCLEOTIDE SEQUENCE [GENOMIC DNA] OF 2768-3092</scope>
    <source>
        <strain>ATCC 204508 / S288c</strain>
    </source>
</reference>
<reference key="6">
    <citation type="journal article" date="2003" name="Nature">
        <title>Global analysis of protein localization in budding yeast.</title>
        <authorList>
            <person name="Huh W.-K."/>
            <person name="Falvo J.V."/>
            <person name="Gerke L.C."/>
            <person name="Carroll A.S."/>
            <person name="Howson R.W."/>
            <person name="Weissman J.S."/>
            <person name="O'Shea E.K."/>
        </authorList>
    </citation>
    <scope>SUBCELLULAR LOCATION [LARGE SCALE ANALYSIS]</scope>
</reference>
<reference key="7">
    <citation type="journal article" date="2008" name="Mol. Cell. Proteomics">
        <title>A multidimensional chromatography technology for in-depth phosphoproteome analysis.</title>
        <authorList>
            <person name="Albuquerque C.P."/>
            <person name="Smolka M.B."/>
            <person name="Payne S.H."/>
            <person name="Bafna V."/>
            <person name="Eng J."/>
            <person name="Zhou H."/>
        </authorList>
    </citation>
    <scope>PHOSPHORYLATION [LARGE SCALE ANALYSIS] AT SER-497</scope>
    <scope>IDENTIFICATION BY MASS SPECTROMETRY [LARGE SCALE ANALYSIS]</scope>
</reference>
<reference key="8">
    <citation type="journal article" date="2009" name="Science">
        <title>Global analysis of Cdk1 substrate phosphorylation sites provides insights into evolution.</title>
        <authorList>
            <person name="Holt L.J."/>
            <person name="Tuch B.B."/>
            <person name="Villen J."/>
            <person name="Johnson A.D."/>
            <person name="Gygi S.P."/>
            <person name="Morgan D.O."/>
        </authorList>
    </citation>
    <scope>PHOSPHORYLATION [LARGE SCALE ANALYSIS] AT SER-497; SER-915 AND SER-1342</scope>
    <scope>IDENTIFICATION BY MASS SPECTROMETRY [LARGE SCALE ANALYSIS]</scope>
</reference>
<dbReference type="EMBL" id="Z36009">
    <property type="protein sequence ID" value="CAA85098.1"/>
    <property type="molecule type" value="Genomic_DNA"/>
</dbReference>
<dbReference type="EMBL" id="M24378">
    <property type="protein sequence ID" value="AAA34709.1"/>
    <property type="molecule type" value="Genomic_DNA"/>
</dbReference>
<dbReference type="EMBL" id="X75891">
    <property type="protein sequence ID" value="CAA53498.1"/>
    <property type="molecule type" value="Genomic_DNA"/>
</dbReference>
<dbReference type="EMBL" id="X78937">
    <property type="protein sequence ID" value="CAA55537.1"/>
    <property type="molecule type" value="Genomic_DNA"/>
</dbReference>
<dbReference type="EMBL" id="BK006936">
    <property type="protein sequence ID" value="DAA07256.1"/>
    <property type="molecule type" value="Genomic_DNA"/>
</dbReference>
<dbReference type="PIR" id="S46009">
    <property type="entry name" value="S46009"/>
</dbReference>
<dbReference type="RefSeq" id="NP_009698.3">
    <property type="nucleotide sequence ID" value="NM_001178488.3"/>
</dbReference>
<dbReference type="SMR" id="P18963"/>
<dbReference type="BioGRID" id="32840">
    <property type="interactions" value="72"/>
</dbReference>
<dbReference type="DIP" id="DIP-2318N"/>
<dbReference type="FunCoup" id="P18963">
    <property type="interactions" value="157"/>
</dbReference>
<dbReference type="IntAct" id="P18963">
    <property type="interactions" value="6"/>
</dbReference>
<dbReference type="MINT" id="P18963"/>
<dbReference type="STRING" id="4932.YBR140C"/>
<dbReference type="iPTMnet" id="P18963"/>
<dbReference type="PaxDb" id="4932-YBR140C"/>
<dbReference type="PeptideAtlas" id="P18963"/>
<dbReference type="EnsemblFungi" id="YBR140C_mRNA">
    <property type="protein sequence ID" value="YBR140C"/>
    <property type="gene ID" value="YBR140C"/>
</dbReference>
<dbReference type="GeneID" id="852437"/>
<dbReference type="KEGG" id="sce:YBR140C"/>
<dbReference type="AGR" id="SGD:S000000344"/>
<dbReference type="SGD" id="S000000344">
    <property type="gene designation" value="IRA1"/>
</dbReference>
<dbReference type="VEuPathDB" id="FungiDB:YBR140C"/>
<dbReference type="eggNOG" id="KOG1826">
    <property type="taxonomic scope" value="Eukaryota"/>
</dbReference>
<dbReference type="GeneTree" id="ENSGT00940000176574"/>
<dbReference type="HOGENOM" id="CLU_000439_0_0_1"/>
<dbReference type="InParanoid" id="P18963"/>
<dbReference type="OMA" id="CPANDID"/>
<dbReference type="OrthoDB" id="28245at2759"/>
<dbReference type="BioCyc" id="YEAST:G3O-29094-MONOMER"/>
<dbReference type="Reactome" id="R-SCE-9696273">
    <property type="pathway name" value="RND1 GTPase cycle"/>
</dbReference>
<dbReference type="BioGRID-ORCS" id="852437">
    <property type="hits" value="1 hit in 10 CRISPR screens"/>
</dbReference>
<dbReference type="PRO" id="PR:P18963"/>
<dbReference type="Proteomes" id="UP000002311">
    <property type="component" value="Chromosome II"/>
</dbReference>
<dbReference type="RNAct" id="P18963">
    <property type="molecule type" value="protein"/>
</dbReference>
<dbReference type="GO" id="GO:0016020">
    <property type="term" value="C:membrane"/>
    <property type="evidence" value="ECO:0000315"/>
    <property type="project" value="SGD"/>
</dbReference>
<dbReference type="GO" id="GO:0005739">
    <property type="term" value="C:mitochondrion"/>
    <property type="evidence" value="ECO:0007005"/>
    <property type="project" value="SGD"/>
</dbReference>
<dbReference type="GO" id="GO:0005096">
    <property type="term" value="F:GTPase activator activity"/>
    <property type="evidence" value="ECO:0000315"/>
    <property type="project" value="SGD"/>
</dbReference>
<dbReference type="GO" id="GO:0007193">
    <property type="term" value="P:adenylate cyclase-inhibiting G protein-coupled receptor signaling pathway"/>
    <property type="evidence" value="ECO:0000315"/>
    <property type="project" value="SGD"/>
</dbReference>
<dbReference type="GO" id="GO:0046580">
    <property type="term" value="P:negative regulation of Ras protein signal transduction"/>
    <property type="evidence" value="ECO:0000315"/>
    <property type="project" value="SGD"/>
</dbReference>
<dbReference type="CDD" id="cd05392">
    <property type="entry name" value="RasGAP_Neurofibromin_like"/>
    <property type="match status" value="1"/>
</dbReference>
<dbReference type="FunFam" id="1.10.506.10:FF:000034">
    <property type="entry name" value="IRA1p GTPase-activating protein"/>
    <property type="match status" value="1"/>
</dbReference>
<dbReference type="Gene3D" id="3.40.525.10">
    <property type="entry name" value="CRAL-TRIO lipid binding domain"/>
    <property type="match status" value="1"/>
</dbReference>
<dbReference type="Gene3D" id="1.10.506.10">
    <property type="entry name" value="GTPase Activation - p120gap, domain 1"/>
    <property type="match status" value="1"/>
</dbReference>
<dbReference type="InterPro" id="IPR036865">
    <property type="entry name" value="CRAL-TRIO_dom_sf"/>
</dbReference>
<dbReference type="InterPro" id="IPR039360">
    <property type="entry name" value="Ras_GTPase"/>
</dbReference>
<dbReference type="InterPro" id="IPR023152">
    <property type="entry name" value="RasGAP_CS"/>
</dbReference>
<dbReference type="InterPro" id="IPR001936">
    <property type="entry name" value="RasGAP_dom"/>
</dbReference>
<dbReference type="InterPro" id="IPR008936">
    <property type="entry name" value="Rho_GTPase_activation_prot"/>
</dbReference>
<dbReference type="PANTHER" id="PTHR10194:SF142">
    <property type="entry name" value="NEUROFIBROMIN"/>
    <property type="match status" value="1"/>
</dbReference>
<dbReference type="PANTHER" id="PTHR10194">
    <property type="entry name" value="RAS GTPASE-ACTIVATING PROTEINS"/>
    <property type="match status" value="1"/>
</dbReference>
<dbReference type="Pfam" id="PF00616">
    <property type="entry name" value="RasGAP"/>
    <property type="match status" value="2"/>
</dbReference>
<dbReference type="SMART" id="SM00323">
    <property type="entry name" value="RasGAP"/>
    <property type="match status" value="1"/>
</dbReference>
<dbReference type="SUPFAM" id="SSF48350">
    <property type="entry name" value="GTPase activation domain, GAP"/>
    <property type="match status" value="1"/>
</dbReference>
<dbReference type="PROSITE" id="PS00509">
    <property type="entry name" value="RAS_GTPASE_ACTIV_1"/>
    <property type="match status" value="1"/>
</dbReference>
<dbReference type="PROSITE" id="PS50018">
    <property type="entry name" value="RAS_GTPASE_ACTIV_2"/>
    <property type="match status" value="1"/>
</dbReference>
<organism>
    <name type="scientific">Saccharomyces cerevisiae (strain ATCC 204508 / S288c)</name>
    <name type="common">Baker's yeast</name>
    <dbReference type="NCBI Taxonomy" id="559292"/>
    <lineage>
        <taxon>Eukaryota</taxon>
        <taxon>Fungi</taxon>
        <taxon>Dikarya</taxon>
        <taxon>Ascomycota</taxon>
        <taxon>Saccharomycotina</taxon>
        <taxon>Saccharomycetes</taxon>
        <taxon>Saccharomycetales</taxon>
        <taxon>Saccharomycetaceae</taxon>
        <taxon>Saccharomyces</taxon>
    </lineage>
</organism>
<proteinExistence type="evidence at protein level"/>
<protein>
    <recommendedName>
        <fullName>Inhibitory regulator protein IRA1</fullName>
    </recommendedName>
</protein>
<gene>
    <name type="primary">IRA1</name>
    <name type="synonym">GLC1</name>
    <name type="synonym">PPD1</name>
    <name type="ordered locus">YBR140C</name>
    <name type="ORF">YBR1016</name>
</gene>
<accession>P18963</accession>
<accession>D6VQD6</accession>